<reference key="1">
    <citation type="journal article" date="1997" name="J. Bacteriol.">
        <title>Complete genome sequence of Methanobacterium thermoautotrophicum deltaH: functional analysis and comparative genomics.</title>
        <authorList>
            <person name="Smith D.R."/>
            <person name="Doucette-Stamm L.A."/>
            <person name="Deloughery C."/>
            <person name="Lee H.-M."/>
            <person name="Dubois J."/>
            <person name="Aldredge T."/>
            <person name="Bashirzadeh R."/>
            <person name="Blakely D."/>
            <person name="Cook R."/>
            <person name="Gilbert K."/>
            <person name="Harrison D."/>
            <person name="Hoang L."/>
            <person name="Keagle P."/>
            <person name="Lumm W."/>
            <person name="Pothier B."/>
            <person name="Qiu D."/>
            <person name="Spadafora R."/>
            <person name="Vicare R."/>
            <person name="Wang Y."/>
            <person name="Wierzbowski J."/>
            <person name="Gibson R."/>
            <person name="Jiwani N."/>
            <person name="Caruso A."/>
            <person name="Bush D."/>
            <person name="Safer H."/>
            <person name="Patwell D."/>
            <person name="Prabhakar S."/>
            <person name="McDougall S."/>
            <person name="Shimer G."/>
            <person name="Goyal A."/>
            <person name="Pietrovski S."/>
            <person name="Church G.M."/>
            <person name="Daniels C.J."/>
            <person name="Mao J.-I."/>
            <person name="Rice P."/>
            <person name="Noelling J."/>
            <person name="Reeve J.N."/>
        </authorList>
    </citation>
    <scope>NUCLEOTIDE SEQUENCE [LARGE SCALE GENOMIC DNA]</scope>
    <source>
        <strain>ATCC 29096 / DSM 1053 / JCM 10044 / NBRC 100330 / Delta H</strain>
    </source>
</reference>
<evidence type="ECO:0000255" key="1">
    <source>
        <dbReference type="HAMAP-Rule" id="MF_00327"/>
    </source>
</evidence>
<evidence type="ECO:0000305" key="2"/>
<comment type="function">
    <text evidence="1">Binds to the 23S rRNA.</text>
</comment>
<comment type="cofactor">
    <cofactor evidence="1">
        <name>Zn(2+)</name>
        <dbReference type="ChEBI" id="CHEBI:29105"/>
    </cofactor>
    <text evidence="1">Binds 1 zinc ion per subunit.</text>
</comment>
<comment type="subunit">
    <text evidence="1">Part of the 50S ribosomal subunit.</text>
</comment>
<comment type="similarity">
    <text evidence="1">Belongs to the eukaryotic ribosomal protein eL43 family. Putative zinc-binding subfamily.</text>
</comment>
<organism>
    <name type="scientific">Methanothermobacter thermautotrophicus (strain ATCC 29096 / DSM 1053 / JCM 10044 / NBRC 100330 / Delta H)</name>
    <name type="common">Methanobacterium thermoautotrophicum</name>
    <dbReference type="NCBI Taxonomy" id="187420"/>
    <lineage>
        <taxon>Archaea</taxon>
        <taxon>Methanobacteriati</taxon>
        <taxon>Methanobacteriota</taxon>
        <taxon>Methanomada group</taxon>
        <taxon>Methanobacteria</taxon>
        <taxon>Methanobacteriales</taxon>
        <taxon>Methanobacteriaceae</taxon>
        <taxon>Methanothermobacter</taxon>
    </lineage>
</organism>
<keyword id="KW-0479">Metal-binding</keyword>
<keyword id="KW-1185">Reference proteome</keyword>
<keyword id="KW-0687">Ribonucleoprotein</keyword>
<keyword id="KW-0689">Ribosomal protein</keyword>
<keyword id="KW-0694">RNA-binding</keyword>
<keyword id="KW-0699">rRNA-binding</keyword>
<keyword id="KW-0862">Zinc</keyword>
<keyword id="KW-0863">Zinc-finger</keyword>
<accession>O26777</accession>
<dbReference type="EMBL" id="AE000666">
    <property type="protein sequence ID" value="AAB85186.1"/>
    <property type="molecule type" value="Genomic_DNA"/>
</dbReference>
<dbReference type="PIR" id="G69190">
    <property type="entry name" value="G69190"/>
</dbReference>
<dbReference type="SMR" id="O26777"/>
<dbReference type="FunCoup" id="O26777">
    <property type="interactions" value="122"/>
</dbReference>
<dbReference type="STRING" id="187420.MTH_681"/>
<dbReference type="PaxDb" id="187420-MTH_681"/>
<dbReference type="EnsemblBacteria" id="AAB85186">
    <property type="protein sequence ID" value="AAB85186"/>
    <property type="gene ID" value="MTH_681"/>
</dbReference>
<dbReference type="KEGG" id="mth:MTH_681"/>
<dbReference type="PATRIC" id="fig|187420.15.peg.662"/>
<dbReference type="HOGENOM" id="CLU_141199_1_0_2"/>
<dbReference type="InParanoid" id="O26777"/>
<dbReference type="Proteomes" id="UP000005223">
    <property type="component" value="Chromosome"/>
</dbReference>
<dbReference type="GO" id="GO:1990904">
    <property type="term" value="C:ribonucleoprotein complex"/>
    <property type="evidence" value="ECO:0007669"/>
    <property type="project" value="UniProtKB-KW"/>
</dbReference>
<dbReference type="GO" id="GO:0005840">
    <property type="term" value="C:ribosome"/>
    <property type="evidence" value="ECO:0007669"/>
    <property type="project" value="UniProtKB-KW"/>
</dbReference>
<dbReference type="GO" id="GO:0070180">
    <property type="term" value="F:large ribosomal subunit rRNA binding"/>
    <property type="evidence" value="ECO:0007669"/>
    <property type="project" value="UniProtKB-UniRule"/>
</dbReference>
<dbReference type="GO" id="GO:0003735">
    <property type="term" value="F:structural constituent of ribosome"/>
    <property type="evidence" value="ECO:0007669"/>
    <property type="project" value="InterPro"/>
</dbReference>
<dbReference type="GO" id="GO:0008270">
    <property type="term" value="F:zinc ion binding"/>
    <property type="evidence" value="ECO:0007669"/>
    <property type="project" value="UniProtKB-UniRule"/>
</dbReference>
<dbReference type="GO" id="GO:0006412">
    <property type="term" value="P:translation"/>
    <property type="evidence" value="ECO:0007669"/>
    <property type="project" value="UniProtKB-UniRule"/>
</dbReference>
<dbReference type="Gene3D" id="2.20.25.30">
    <property type="match status" value="1"/>
</dbReference>
<dbReference type="HAMAP" id="MF_00327">
    <property type="entry name" value="Ribosomal_eL43"/>
    <property type="match status" value="1"/>
</dbReference>
<dbReference type="InterPro" id="IPR011331">
    <property type="entry name" value="Ribosomal_eL37/eL43"/>
</dbReference>
<dbReference type="InterPro" id="IPR002674">
    <property type="entry name" value="Ribosomal_eL43"/>
</dbReference>
<dbReference type="InterPro" id="IPR050522">
    <property type="entry name" value="Ribosomal_protein_eL43"/>
</dbReference>
<dbReference type="InterPro" id="IPR011332">
    <property type="entry name" value="Ribosomal_zn-bd"/>
</dbReference>
<dbReference type="NCBIfam" id="TIGR00280">
    <property type="entry name" value="eL43_euk_arch"/>
    <property type="match status" value="1"/>
</dbReference>
<dbReference type="NCBIfam" id="NF003058">
    <property type="entry name" value="PRK03976.1"/>
    <property type="match status" value="1"/>
</dbReference>
<dbReference type="PANTHER" id="PTHR48129">
    <property type="entry name" value="60S RIBOSOMAL PROTEIN L37A"/>
    <property type="match status" value="1"/>
</dbReference>
<dbReference type="PANTHER" id="PTHR48129:SF1">
    <property type="entry name" value="LARGE RIBOSOMAL SUBUNIT PROTEIN EL43"/>
    <property type="match status" value="1"/>
</dbReference>
<dbReference type="Pfam" id="PF01780">
    <property type="entry name" value="Ribosomal_L37ae"/>
    <property type="match status" value="1"/>
</dbReference>
<dbReference type="SUPFAM" id="SSF57829">
    <property type="entry name" value="Zn-binding ribosomal proteins"/>
    <property type="match status" value="1"/>
</dbReference>
<sequence length="89" mass="9903">MARTKKVGITGRFGPRYGRKAKRAVKKIEEEMKRKHVCPSCDRPGVKRESRGIWKCRKCGAVFTGGAYLPVTPMGKTAARNIKRIVGGK</sequence>
<protein>
    <recommendedName>
        <fullName evidence="1">Large ribosomal subunit protein eL43</fullName>
    </recommendedName>
    <alternativeName>
        <fullName evidence="2">50S ribosomal protein L37Ae</fullName>
    </alternativeName>
    <alternativeName>
        <fullName evidence="1">Ribosomal protein L43e</fullName>
    </alternativeName>
</protein>
<name>RL37A_METTH</name>
<gene>
    <name evidence="1" type="primary">rpl37ae</name>
    <name type="ordered locus">MTH_681</name>
</gene>
<feature type="chain" id="PRO_0000139846" description="Large ribosomal subunit protein eL43">
    <location>
        <begin position="1"/>
        <end position="89"/>
    </location>
</feature>
<feature type="zinc finger region" description="C4-type" evidence="1">
    <location>
        <begin position="38"/>
        <end position="59"/>
    </location>
</feature>
<feature type="binding site" evidence="1">
    <location>
        <position position="38"/>
    </location>
    <ligand>
        <name>Zn(2+)</name>
        <dbReference type="ChEBI" id="CHEBI:29105"/>
    </ligand>
</feature>
<feature type="binding site" evidence="1">
    <location>
        <position position="41"/>
    </location>
    <ligand>
        <name>Zn(2+)</name>
        <dbReference type="ChEBI" id="CHEBI:29105"/>
    </ligand>
</feature>
<feature type="binding site" evidence="1">
    <location>
        <position position="56"/>
    </location>
    <ligand>
        <name>Zn(2+)</name>
        <dbReference type="ChEBI" id="CHEBI:29105"/>
    </ligand>
</feature>
<feature type="binding site" evidence="1">
    <location>
        <position position="59"/>
    </location>
    <ligand>
        <name>Zn(2+)</name>
        <dbReference type="ChEBI" id="CHEBI:29105"/>
    </ligand>
</feature>
<proteinExistence type="inferred from homology"/>